<protein>
    <recommendedName>
        <fullName>1-(5-phosphoribosyl)-5-[(5-phosphoribosylamino)methylideneamino] imidazole-4-carboxamide isomerase</fullName>
        <ecNumber>5.3.1.16</ecNumber>
    </recommendedName>
    <alternativeName>
        <fullName>Phosphoribosylformimino-5-aminoimidazole carboxamide ribotide isomerase</fullName>
    </alternativeName>
</protein>
<gene>
    <name type="primary">hisA</name>
    <name type="ordered locus">RSc2947</name>
    <name type="ORF">RS00139</name>
</gene>
<organism>
    <name type="scientific">Ralstonia nicotianae (strain ATCC BAA-1114 / GMI1000)</name>
    <name type="common">Ralstonia solanacearum</name>
    <dbReference type="NCBI Taxonomy" id="267608"/>
    <lineage>
        <taxon>Bacteria</taxon>
        <taxon>Pseudomonadati</taxon>
        <taxon>Pseudomonadota</taxon>
        <taxon>Betaproteobacteria</taxon>
        <taxon>Burkholderiales</taxon>
        <taxon>Burkholderiaceae</taxon>
        <taxon>Ralstonia</taxon>
        <taxon>Ralstonia solanacearum species complex</taxon>
    </lineage>
</organism>
<comment type="catalytic activity">
    <reaction>
        <text>1-(5-phospho-beta-D-ribosyl)-5-[(5-phospho-beta-D-ribosylamino)methylideneamino]imidazole-4-carboxamide = 5-[(5-phospho-1-deoxy-D-ribulos-1-ylimino)methylamino]-1-(5-phospho-beta-D-ribosyl)imidazole-4-carboxamide</text>
        <dbReference type="Rhea" id="RHEA:15469"/>
        <dbReference type="ChEBI" id="CHEBI:58435"/>
        <dbReference type="ChEBI" id="CHEBI:58525"/>
        <dbReference type="EC" id="5.3.1.16"/>
    </reaction>
</comment>
<comment type="pathway">
    <text>Amino-acid biosynthesis; L-histidine biosynthesis; L-histidine from 5-phospho-alpha-D-ribose 1-diphosphate: step 4/9.</text>
</comment>
<comment type="subcellular location">
    <subcellularLocation>
        <location evidence="1">Cytoplasm</location>
    </subcellularLocation>
</comment>
<comment type="similarity">
    <text evidence="2">Belongs to the HisA/HisF family.</text>
</comment>
<dbReference type="EC" id="5.3.1.16"/>
<dbReference type="EMBL" id="AL646052">
    <property type="protein sequence ID" value="CAD16654.1"/>
    <property type="molecule type" value="Genomic_DNA"/>
</dbReference>
<dbReference type="RefSeq" id="WP_011002852.1">
    <property type="nucleotide sequence ID" value="NC_003295.1"/>
</dbReference>
<dbReference type="SMR" id="Q8XV84"/>
<dbReference type="STRING" id="267608.RSc2947"/>
<dbReference type="EnsemblBacteria" id="CAD16654">
    <property type="protein sequence ID" value="CAD16654"/>
    <property type="gene ID" value="RSc2947"/>
</dbReference>
<dbReference type="KEGG" id="rso:RSc2947"/>
<dbReference type="eggNOG" id="COG0106">
    <property type="taxonomic scope" value="Bacteria"/>
</dbReference>
<dbReference type="HOGENOM" id="CLU_048577_1_1_4"/>
<dbReference type="UniPathway" id="UPA00031">
    <property type="reaction ID" value="UER00009"/>
</dbReference>
<dbReference type="Proteomes" id="UP000001436">
    <property type="component" value="Chromosome"/>
</dbReference>
<dbReference type="GO" id="GO:0005737">
    <property type="term" value="C:cytoplasm"/>
    <property type="evidence" value="ECO:0007669"/>
    <property type="project" value="UniProtKB-SubCell"/>
</dbReference>
<dbReference type="GO" id="GO:0003949">
    <property type="term" value="F:1-(5-phosphoribosyl)-5-[(5-phosphoribosylamino)methylideneamino]imidazole-4-carboxamide isomerase activity"/>
    <property type="evidence" value="ECO:0007669"/>
    <property type="project" value="UniProtKB-UniRule"/>
</dbReference>
<dbReference type="GO" id="GO:0000105">
    <property type="term" value="P:L-histidine biosynthetic process"/>
    <property type="evidence" value="ECO:0007669"/>
    <property type="project" value="UniProtKB-UniRule"/>
</dbReference>
<dbReference type="GO" id="GO:0000162">
    <property type="term" value="P:L-tryptophan biosynthetic process"/>
    <property type="evidence" value="ECO:0007669"/>
    <property type="project" value="TreeGrafter"/>
</dbReference>
<dbReference type="CDD" id="cd04732">
    <property type="entry name" value="HisA"/>
    <property type="match status" value="1"/>
</dbReference>
<dbReference type="FunFam" id="3.20.20.70:FF:000009">
    <property type="entry name" value="1-(5-phosphoribosyl)-5-[(5-phosphoribosylamino)methylideneamino] imidazole-4-carboxamide isomerase"/>
    <property type="match status" value="1"/>
</dbReference>
<dbReference type="Gene3D" id="3.20.20.70">
    <property type="entry name" value="Aldolase class I"/>
    <property type="match status" value="1"/>
</dbReference>
<dbReference type="HAMAP" id="MF_01014">
    <property type="entry name" value="HisA"/>
    <property type="match status" value="1"/>
</dbReference>
<dbReference type="InterPro" id="IPR013785">
    <property type="entry name" value="Aldolase_TIM"/>
</dbReference>
<dbReference type="InterPro" id="IPR006062">
    <property type="entry name" value="His_biosynth"/>
</dbReference>
<dbReference type="InterPro" id="IPR006063">
    <property type="entry name" value="HisA_bact_arch"/>
</dbReference>
<dbReference type="InterPro" id="IPR044524">
    <property type="entry name" value="Isoase_HisA-like"/>
</dbReference>
<dbReference type="InterPro" id="IPR023016">
    <property type="entry name" value="Isoase_HisA-like_bact"/>
</dbReference>
<dbReference type="InterPro" id="IPR011060">
    <property type="entry name" value="RibuloseP-bd_barrel"/>
</dbReference>
<dbReference type="NCBIfam" id="TIGR00007">
    <property type="entry name" value="1-(5-phosphoribosyl)-5-[(5-phosphoribosylamino)methylideneamino]imidazole-4-carboxamide isomerase"/>
    <property type="match status" value="1"/>
</dbReference>
<dbReference type="NCBIfam" id="NF010112">
    <property type="entry name" value="PRK13585.1"/>
    <property type="match status" value="1"/>
</dbReference>
<dbReference type="PANTHER" id="PTHR43090">
    <property type="entry name" value="1-(5-PHOSPHORIBOSYL)-5-[(5-PHOSPHORIBOSYLAMINO)METHYLIDENEAMINO] IMIDAZOLE-4-CARBOXAMIDE ISOMERASE"/>
    <property type="match status" value="1"/>
</dbReference>
<dbReference type="PANTHER" id="PTHR43090:SF2">
    <property type="entry name" value="1-(5-PHOSPHORIBOSYL)-5-[(5-PHOSPHORIBOSYLAMINO)METHYLIDENEAMINO] IMIDAZOLE-4-CARBOXAMIDE ISOMERASE"/>
    <property type="match status" value="1"/>
</dbReference>
<dbReference type="Pfam" id="PF00977">
    <property type="entry name" value="His_biosynth"/>
    <property type="match status" value="1"/>
</dbReference>
<dbReference type="SUPFAM" id="SSF51366">
    <property type="entry name" value="Ribulose-phoshate binding barrel"/>
    <property type="match status" value="1"/>
</dbReference>
<feature type="chain" id="PRO_0000142041" description="1-(5-phosphoribosyl)-5-[(5-phosphoribosylamino)methylideneamino] imidazole-4-carboxamide isomerase">
    <location>
        <begin position="1"/>
        <end position="247"/>
    </location>
</feature>
<feature type="active site" description="Proton acceptor" evidence="1">
    <location>
        <position position="8"/>
    </location>
</feature>
<feature type="active site" description="Proton donor" evidence="1">
    <location>
        <position position="131"/>
    </location>
</feature>
<keyword id="KW-0028">Amino-acid biosynthesis</keyword>
<keyword id="KW-0963">Cytoplasm</keyword>
<keyword id="KW-0368">Histidine biosynthesis</keyword>
<keyword id="KW-0413">Isomerase</keyword>
<keyword id="KW-1185">Reference proteome</keyword>
<name>HIS4_RALN1</name>
<accession>Q8XV84</accession>
<sequence>MLLIPAIDLKDGQCVRLKQGDMDQATVFSEDPAAMARHWVDQGARRLHLVDLNGAFVGKPRNEAAIKAIIAEVGSEIPVQLGGGIRDLNTIERWLDDGLSYVIIGTAAVKNPGFLQDACTAFGGHIIVGLDARDGKVATDGWSKLTGHEVVDLARKYEDYGVESIIYTDIGRDGMLQGINIDATVKLAQSVSIPVIASGGLSSLKDIDHLCAVESEGVEGVICGRAIYSGDLNFREAQDHADKLGAA</sequence>
<reference key="1">
    <citation type="journal article" date="2002" name="Nature">
        <title>Genome sequence of the plant pathogen Ralstonia solanacearum.</title>
        <authorList>
            <person name="Salanoubat M."/>
            <person name="Genin S."/>
            <person name="Artiguenave F."/>
            <person name="Gouzy J."/>
            <person name="Mangenot S."/>
            <person name="Arlat M."/>
            <person name="Billault A."/>
            <person name="Brottier P."/>
            <person name="Camus J.-C."/>
            <person name="Cattolico L."/>
            <person name="Chandler M."/>
            <person name="Choisne N."/>
            <person name="Claudel-Renard C."/>
            <person name="Cunnac S."/>
            <person name="Demange N."/>
            <person name="Gaspin C."/>
            <person name="Lavie M."/>
            <person name="Moisan A."/>
            <person name="Robert C."/>
            <person name="Saurin W."/>
            <person name="Schiex T."/>
            <person name="Siguier P."/>
            <person name="Thebault P."/>
            <person name="Whalen M."/>
            <person name="Wincker P."/>
            <person name="Levy M."/>
            <person name="Weissenbach J."/>
            <person name="Boucher C.A."/>
        </authorList>
    </citation>
    <scope>NUCLEOTIDE SEQUENCE [LARGE SCALE GENOMIC DNA]</scope>
    <source>
        <strain>ATCC BAA-1114 / GMI1000</strain>
    </source>
</reference>
<evidence type="ECO:0000250" key="1"/>
<evidence type="ECO:0000305" key="2"/>
<proteinExistence type="inferred from homology"/>